<comment type="function">
    <text evidence="1">Catalyzes the attachment of proline to tRNA(Pro) in a two-step reaction: proline is first activated by ATP to form Pro-AMP and then transferred to the acceptor end of tRNA(Pro). As ProRS can inadvertently accommodate and process non-cognate amino acids such as alanine and cysteine, to avoid such errors it has two additional distinct editing activities against alanine. One activity is designated as 'pretransfer' editing and involves the tRNA(Pro)-independent hydrolysis of activated Ala-AMP. The other activity is designated 'posttransfer' editing and involves deacylation of mischarged Ala-tRNA(Pro). The misacylated Cys-tRNA(Pro) is not edited by ProRS.</text>
</comment>
<comment type="catalytic activity">
    <reaction evidence="1">
        <text>tRNA(Pro) + L-proline + ATP = L-prolyl-tRNA(Pro) + AMP + diphosphate</text>
        <dbReference type="Rhea" id="RHEA:14305"/>
        <dbReference type="Rhea" id="RHEA-COMP:9700"/>
        <dbReference type="Rhea" id="RHEA-COMP:9702"/>
        <dbReference type="ChEBI" id="CHEBI:30616"/>
        <dbReference type="ChEBI" id="CHEBI:33019"/>
        <dbReference type="ChEBI" id="CHEBI:60039"/>
        <dbReference type="ChEBI" id="CHEBI:78442"/>
        <dbReference type="ChEBI" id="CHEBI:78532"/>
        <dbReference type="ChEBI" id="CHEBI:456215"/>
        <dbReference type="EC" id="6.1.1.15"/>
    </reaction>
</comment>
<comment type="subunit">
    <text evidence="1">Homodimer.</text>
</comment>
<comment type="subcellular location">
    <subcellularLocation>
        <location evidence="1">Cytoplasm</location>
    </subcellularLocation>
</comment>
<comment type="domain">
    <text evidence="1">Consists of three domains: the N-terminal catalytic domain, the editing domain and the C-terminal anticodon-binding domain.</text>
</comment>
<comment type="similarity">
    <text evidence="1">Belongs to the class-II aminoacyl-tRNA synthetase family. ProS type 1 subfamily.</text>
</comment>
<evidence type="ECO:0000255" key="1">
    <source>
        <dbReference type="HAMAP-Rule" id="MF_01569"/>
    </source>
</evidence>
<organism>
    <name type="scientific">Hydrogenobaculum sp. (strain Y04AAS1)</name>
    <dbReference type="NCBI Taxonomy" id="380749"/>
    <lineage>
        <taxon>Bacteria</taxon>
        <taxon>Pseudomonadati</taxon>
        <taxon>Aquificota</taxon>
        <taxon>Aquificia</taxon>
        <taxon>Aquificales</taxon>
        <taxon>Aquificaceae</taxon>
        <taxon>Hydrogenobaculum</taxon>
    </lineage>
</organism>
<accession>B4U8B2</accession>
<name>SYP_HYDS0</name>
<sequence length="565" mass="64570">MRWSRYFLYTTKEEPSETEAASHRFLTKAGFIKQVASGIYELTPIAFRVLKKIENIVRDEMDKAGAQELLLTILNPAELWKETGRWDYYGNELFKLKDRSDRDYCLGPTHEEEITDLVRKTVRSYKQLPLNLYQIHTKFRDEKRPRYGLIRGREFIMKDAYSFDTDEESAKNSYDIMVKAYKNIFKRLNLNILMVKADVGQIGGKSSHEFVAITKYGEALIAYCENCGYAANTEIVELKKPNVEKEPPLVLEEVYTPNIKTIEELSSFLNVAKSKIIKSVLYIKEDKPIMVLIRGDKKIDEKKLERLFGTDEFRLAEDDEVLRLLNTEKGFIGPFVEGKDIEIIVDNSLYNASNMVVAFNKPHYHYKNANIDFENFVDVAQVEENDPCPECGSPLKVAQGLELGHTFLLGTRYSLPMKAFFTDKDGVEKPVVMGCYGIGISRLIAALVEQYHDEKGIKWPLPVAPFQVLISCVNTSDDIQYSTSEHLYKSLTQEGIEVLFDDRDVSPGVKFNDADLIGIPYRIVVGKKAKDGLVEVVDRHTLKAVDVPIDKVLDYIKDILNVNGR</sequence>
<protein>
    <recommendedName>
        <fullName evidence="1">Proline--tRNA ligase</fullName>
        <ecNumber evidence="1">6.1.1.15</ecNumber>
    </recommendedName>
    <alternativeName>
        <fullName evidence="1">Prolyl-tRNA synthetase</fullName>
        <shortName evidence="1">ProRS</shortName>
    </alternativeName>
</protein>
<proteinExistence type="inferred from homology"/>
<keyword id="KW-0030">Aminoacyl-tRNA synthetase</keyword>
<keyword id="KW-0067">ATP-binding</keyword>
<keyword id="KW-0963">Cytoplasm</keyword>
<keyword id="KW-0436">Ligase</keyword>
<keyword id="KW-0547">Nucleotide-binding</keyword>
<keyword id="KW-0648">Protein biosynthesis</keyword>
<gene>
    <name evidence="1" type="primary">proS</name>
    <name type="ordered locus">HY04AAS1_0686</name>
</gene>
<feature type="chain" id="PRO_1000199396" description="Proline--tRNA ligase">
    <location>
        <begin position="1"/>
        <end position="565"/>
    </location>
</feature>
<dbReference type="EC" id="6.1.1.15" evidence="1"/>
<dbReference type="EMBL" id="CP001130">
    <property type="protein sequence ID" value="ACG57373.1"/>
    <property type="molecule type" value="Genomic_DNA"/>
</dbReference>
<dbReference type="RefSeq" id="WP_012513729.1">
    <property type="nucleotide sequence ID" value="NC_011126.1"/>
</dbReference>
<dbReference type="SMR" id="B4U8B2"/>
<dbReference type="STRING" id="380749.HY04AAS1_0686"/>
<dbReference type="KEGG" id="hya:HY04AAS1_0686"/>
<dbReference type="eggNOG" id="COG0442">
    <property type="taxonomic scope" value="Bacteria"/>
</dbReference>
<dbReference type="HOGENOM" id="CLU_016739_0_0_0"/>
<dbReference type="OrthoDB" id="9809052at2"/>
<dbReference type="GO" id="GO:0005829">
    <property type="term" value="C:cytosol"/>
    <property type="evidence" value="ECO:0007669"/>
    <property type="project" value="TreeGrafter"/>
</dbReference>
<dbReference type="GO" id="GO:0002161">
    <property type="term" value="F:aminoacyl-tRNA deacylase activity"/>
    <property type="evidence" value="ECO:0007669"/>
    <property type="project" value="InterPro"/>
</dbReference>
<dbReference type="GO" id="GO:0005524">
    <property type="term" value="F:ATP binding"/>
    <property type="evidence" value="ECO:0007669"/>
    <property type="project" value="UniProtKB-UniRule"/>
</dbReference>
<dbReference type="GO" id="GO:0004827">
    <property type="term" value="F:proline-tRNA ligase activity"/>
    <property type="evidence" value="ECO:0007669"/>
    <property type="project" value="UniProtKB-UniRule"/>
</dbReference>
<dbReference type="GO" id="GO:0006433">
    <property type="term" value="P:prolyl-tRNA aminoacylation"/>
    <property type="evidence" value="ECO:0007669"/>
    <property type="project" value="UniProtKB-UniRule"/>
</dbReference>
<dbReference type="CDD" id="cd04334">
    <property type="entry name" value="ProRS-INS"/>
    <property type="match status" value="1"/>
</dbReference>
<dbReference type="CDD" id="cd00861">
    <property type="entry name" value="ProRS_anticodon_short"/>
    <property type="match status" value="1"/>
</dbReference>
<dbReference type="CDD" id="cd00779">
    <property type="entry name" value="ProRS_core_prok"/>
    <property type="match status" value="1"/>
</dbReference>
<dbReference type="FunFam" id="3.30.930.10:FF:000066">
    <property type="entry name" value="Proline--tRNA ligase"/>
    <property type="match status" value="1"/>
</dbReference>
<dbReference type="FunFam" id="3.40.50.800:FF:000011">
    <property type="entry name" value="Proline--tRNA ligase"/>
    <property type="match status" value="1"/>
</dbReference>
<dbReference type="Gene3D" id="3.40.50.800">
    <property type="entry name" value="Anticodon-binding domain"/>
    <property type="match status" value="1"/>
</dbReference>
<dbReference type="Gene3D" id="3.30.930.10">
    <property type="entry name" value="Bira Bifunctional Protein, Domain 2"/>
    <property type="match status" value="2"/>
</dbReference>
<dbReference type="HAMAP" id="MF_01569">
    <property type="entry name" value="Pro_tRNA_synth_type1"/>
    <property type="match status" value="1"/>
</dbReference>
<dbReference type="InterPro" id="IPR002314">
    <property type="entry name" value="aa-tRNA-synt_IIb"/>
</dbReference>
<dbReference type="InterPro" id="IPR006195">
    <property type="entry name" value="aa-tRNA-synth_II"/>
</dbReference>
<dbReference type="InterPro" id="IPR045864">
    <property type="entry name" value="aa-tRNA-synth_II/BPL/LPL"/>
</dbReference>
<dbReference type="InterPro" id="IPR004154">
    <property type="entry name" value="Anticodon-bd"/>
</dbReference>
<dbReference type="InterPro" id="IPR036621">
    <property type="entry name" value="Anticodon-bd_dom_sf"/>
</dbReference>
<dbReference type="InterPro" id="IPR002316">
    <property type="entry name" value="Pro-tRNA-ligase_IIa"/>
</dbReference>
<dbReference type="InterPro" id="IPR004500">
    <property type="entry name" value="Pro-tRNA-synth_IIa_bac-type"/>
</dbReference>
<dbReference type="InterPro" id="IPR023717">
    <property type="entry name" value="Pro-tRNA-Synthase_IIa_type1"/>
</dbReference>
<dbReference type="InterPro" id="IPR050062">
    <property type="entry name" value="Pro-tRNA_synthetase"/>
</dbReference>
<dbReference type="InterPro" id="IPR044140">
    <property type="entry name" value="ProRS_anticodon_short"/>
</dbReference>
<dbReference type="InterPro" id="IPR033730">
    <property type="entry name" value="ProRS_core_prok"/>
</dbReference>
<dbReference type="InterPro" id="IPR036754">
    <property type="entry name" value="YbaK/aa-tRNA-synt-asso_dom_sf"/>
</dbReference>
<dbReference type="InterPro" id="IPR007214">
    <property type="entry name" value="YbaK/aa-tRNA-synth-assoc-dom"/>
</dbReference>
<dbReference type="NCBIfam" id="NF006625">
    <property type="entry name" value="PRK09194.1"/>
    <property type="match status" value="1"/>
</dbReference>
<dbReference type="NCBIfam" id="TIGR00409">
    <property type="entry name" value="proS_fam_II"/>
    <property type="match status" value="1"/>
</dbReference>
<dbReference type="PANTHER" id="PTHR42753">
    <property type="entry name" value="MITOCHONDRIAL RIBOSOME PROTEIN L39/PROLYL-TRNA LIGASE FAMILY MEMBER"/>
    <property type="match status" value="1"/>
</dbReference>
<dbReference type="PANTHER" id="PTHR42753:SF2">
    <property type="entry name" value="PROLINE--TRNA LIGASE"/>
    <property type="match status" value="1"/>
</dbReference>
<dbReference type="Pfam" id="PF03129">
    <property type="entry name" value="HGTP_anticodon"/>
    <property type="match status" value="1"/>
</dbReference>
<dbReference type="Pfam" id="PF00587">
    <property type="entry name" value="tRNA-synt_2b"/>
    <property type="match status" value="1"/>
</dbReference>
<dbReference type="Pfam" id="PF04073">
    <property type="entry name" value="tRNA_edit"/>
    <property type="match status" value="1"/>
</dbReference>
<dbReference type="PRINTS" id="PR01046">
    <property type="entry name" value="TRNASYNTHPRO"/>
</dbReference>
<dbReference type="SUPFAM" id="SSF52954">
    <property type="entry name" value="Class II aaRS ABD-related"/>
    <property type="match status" value="1"/>
</dbReference>
<dbReference type="SUPFAM" id="SSF55681">
    <property type="entry name" value="Class II aaRS and biotin synthetases"/>
    <property type="match status" value="1"/>
</dbReference>
<dbReference type="SUPFAM" id="SSF55826">
    <property type="entry name" value="YbaK/ProRS associated domain"/>
    <property type="match status" value="1"/>
</dbReference>
<dbReference type="PROSITE" id="PS50862">
    <property type="entry name" value="AA_TRNA_LIGASE_II"/>
    <property type="match status" value="1"/>
</dbReference>
<reference key="1">
    <citation type="journal article" date="2009" name="J. Bacteriol.">
        <title>Complete and draft genome sequences of six members of the Aquificales.</title>
        <authorList>
            <person name="Reysenbach A.-L."/>
            <person name="Hamamura N."/>
            <person name="Podar M."/>
            <person name="Griffiths E."/>
            <person name="Ferreira S."/>
            <person name="Hochstein R."/>
            <person name="Heidelberg J."/>
            <person name="Johnson J."/>
            <person name="Mead D."/>
            <person name="Pohorille A."/>
            <person name="Sarmiento M."/>
            <person name="Schweighofer K."/>
            <person name="Seshadri R."/>
            <person name="Voytek M.A."/>
        </authorList>
    </citation>
    <scope>NUCLEOTIDE SEQUENCE [LARGE SCALE GENOMIC DNA]</scope>
    <source>
        <strain>Y04AAS1</strain>
    </source>
</reference>